<reference key="1">
    <citation type="journal article" date="2005" name="J. Bacteriol.">
        <title>Insights on evolution of virulence and resistance from the complete genome analysis of an early methicillin-resistant Staphylococcus aureus strain and a biofilm-producing methicillin-resistant Staphylococcus epidermidis strain.</title>
        <authorList>
            <person name="Gill S.R."/>
            <person name="Fouts D.E."/>
            <person name="Archer G.L."/>
            <person name="Mongodin E.F."/>
            <person name="DeBoy R.T."/>
            <person name="Ravel J."/>
            <person name="Paulsen I.T."/>
            <person name="Kolonay J.F."/>
            <person name="Brinkac L.M."/>
            <person name="Beanan M.J."/>
            <person name="Dodson R.J."/>
            <person name="Daugherty S.C."/>
            <person name="Madupu R."/>
            <person name="Angiuoli S.V."/>
            <person name="Durkin A.S."/>
            <person name="Haft D.H."/>
            <person name="Vamathevan J.J."/>
            <person name="Khouri H."/>
            <person name="Utterback T.R."/>
            <person name="Lee C."/>
            <person name="Dimitrov G."/>
            <person name="Jiang L."/>
            <person name="Qin H."/>
            <person name="Weidman J."/>
            <person name="Tran K."/>
            <person name="Kang K.H."/>
            <person name="Hance I.R."/>
            <person name="Nelson K.E."/>
            <person name="Fraser C.M."/>
        </authorList>
    </citation>
    <scope>NUCLEOTIDE SEQUENCE [LARGE SCALE GENOMIC DNA]</scope>
    <source>
        <strain>COL</strain>
    </source>
</reference>
<feature type="chain" id="PRO_0000147724" description="GTP cyclohydrolase FolE2">
    <location>
        <begin position="1"/>
        <end position="292"/>
    </location>
</feature>
<feature type="site" description="May be catalytically important" evidence="1">
    <location>
        <position position="176"/>
    </location>
</feature>
<protein>
    <recommendedName>
        <fullName evidence="1">GTP cyclohydrolase FolE2</fullName>
        <ecNumber evidence="1">3.5.4.16</ecNumber>
    </recommendedName>
</protein>
<sequence length="292" mass="33482">MTEFDLSTREGRWKHFGSVDPIEGTKPTTKNEMTDLQSTHKDFLFEIEEVGIKNLVYPVLVDQYQTAGTFSFSTSLTKDEKGINMSRIIESVEKHYDNGIELEFNTLYQVLRTLQTNMKQNAAGVDVSGKWFFDRYSPTTNIKAVGNADVTYGLAIDGDKVTRKELTIEATVTTLCPCSKEISEYSAHNQRGVVTVKTYINKDQDIVDDYKNKILDAMEANASSILYPILKRPDEKRVTERAYENPRFVEDLIRLIAADLVEFDWLDGFDIECRNEESIHQHDAFAKLKYRK</sequence>
<keyword id="KW-0378">Hydrolase</keyword>
<gene>
    <name evidence="1" type="primary">folE2</name>
    <name type="ordered locus">SACOL0613</name>
</gene>
<evidence type="ECO:0000255" key="1">
    <source>
        <dbReference type="HAMAP-Rule" id="MF_01527"/>
    </source>
</evidence>
<organism>
    <name type="scientific">Staphylococcus aureus (strain COL)</name>
    <dbReference type="NCBI Taxonomy" id="93062"/>
    <lineage>
        <taxon>Bacteria</taxon>
        <taxon>Bacillati</taxon>
        <taxon>Bacillota</taxon>
        <taxon>Bacilli</taxon>
        <taxon>Bacillales</taxon>
        <taxon>Staphylococcaceae</taxon>
        <taxon>Staphylococcus</taxon>
    </lineage>
</organism>
<proteinExistence type="inferred from homology"/>
<dbReference type="EC" id="3.5.4.16" evidence="1"/>
<dbReference type="EMBL" id="CP000046">
    <property type="protein sequence ID" value="AAW37722.1"/>
    <property type="molecule type" value="Genomic_DNA"/>
</dbReference>
<dbReference type="RefSeq" id="WP_000134232.1">
    <property type="nucleotide sequence ID" value="NZ_JBGOFO010000005.1"/>
</dbReference>
<dbReference type="SMR" id="Q5HIA9"/>
<dbReference type="KEGG" id="sac:SACOL0613"/>
<dbReference type="HOGENOM" id="CLU_062816_1_1_9"/>
<dbReference type="UniPathway" id="UPA00848">
    <property type="reaction ID" value="UER00151"/>
</dbReference>
<dbReference type="Proteomes" id="UP000000530">
    <property type="component" value="Chromosome"/>
</dbReference>
<dbReference type="GO" id="GO:0003934">
    <property type="term" value="F:GTP cyclohydrolase I activity"/>
    <property type="evidence" value="ECO:0007669"/>
    <property type="project" value="UniProtKB-UniRule"/>
</dbReference>
<dbReference type="GO" id="GO:0046654">
    <property type="term" value="P:tetrahydrofolate biosynthetic process"/>
    <property type="evidence" value="ECO:0007669"/>
    <property type="project" value="UniProtKB-UniRule"/>
</dbReference>
<dbReference type="Gene3D" id="3.10.270.10">
    <property type="entry name" value="Urate Oxidase"/>
    <property type="match status" value="1"/>
</dbReference>
<dbReference type="HAMAP" id="MF_01527_B">
    <property type="entry name" value="GTP_cyclohydrol_B"/>
    <property type="match status" value="1"/>
</dbReference>
<dbReference type="InterPro" id="IPR022838">
    <property type="entry name" value="GTP_cyclohydrolase_FolE2"/>
</dbReference>
<dbReference type="InterPro" id="IPR003801">
    <property type="entry name" value="GTP_cyclohydrolase_FolE2/MptA"/>
</dbReference>
<dbReference type="NCBIfam" id="NF010200">
    <property type="entry name" value="PRK13674.1-1"/>
    <property type="match status" value="1"/>
</dbReference>
<dbReference type="PANTHER" id="PTHR36445">
    <property type="entry name" value="GTP CYCLOHYDROLASE MPTA"/>
    <property type="match status" value="1"/>
</dbReference>
<dbReference type="PANTHER" id="PTHR36445:SF1">
    <property type="entry name" value="GTP CYCLOHYDROLASE MPTA"/>
    <property type="match status" value="1"/>
</dbReference>
<dbReference type="Pfam" id="PF02649">
    <property type="entry name" value="GCHY-1"/>
    <property type="match status" value="1"/>
</dbReference>
<accession>Q5HIA9</accession>
<comment type="function">
    <text evidence="1">Converts GTP to 7,8-dihydroneopterin triphosphate.</text>
</comment>
<comment type="catalytic activity">
    <reaction evidence="1">
        <text>GTP + H2O = 7,8-dihydroneopterin 3'-triphosphate + formate + H(+)</text>
        <dbReference type="Rhea" id="RHEA:17473"/>
        <dbReference type="ChEBI" id="CHEBI:15377"/>
        <dbReference type="ChEBI" id="CHEBI:15378"/>
        <dbReference type="ChEBI" id="CHEBI:15740"/>
        <dbReference type="ChEBI" id="CHEBI:37565"/>
        <dbReference type="ChEBI" id="CHEBI:58462"/>
        <dbReference type="EC" id="3.5.4.16"/>
    </reaction>
</comment>
<comment type="pathway">
    <text evidence="1">Cofactor biosynthesis; 7,8-dihydroneopterin triphosphate biosynthesis; 7,8-dihydroneopterin triphosphate from GTP: step 1/1.</text>
</comment>
<comment type="similarity">
    <text evidence="1">Belongs to the GTP cyclohydrolase IV family.</text>
</comment>
<name>GCH4_STAAC</name>